<proteinExistence type="inferred from homology"/>
<feature type="chain" id="PRO_0000138250" description="CTP synthase">
    <location>
        <begin position="1"/>
        <end position="546"/>
    </location>
</feature>
<feature type="domain" description="Glutamine amidotransferase type-1" evidence="1">
    <location>
        <begin position="291"/>
        <end position="544"/>
    </location>
</feature>
<feature type="region of interest" description="Amidoligase domain" evidence="1">
    <location>
        <begin position="1"/>
        <end position="266"/>
    </location>
</feature>
<feature type="active site" description="Nucleophile; for glutamine hydrolysis" evidence="1">
    <location>
        <position position="379"/>
    </location>
</feature>
<feature type="active site" evidence="1">
    <location>
        <position position="517"/>
    </location>
</feature>
<feature type="active site" evidence="1">
    <location>
        <position position="519"/>
    </location>
</feature>
<feature type="binding site" evidence="1">
    <location>
        <position position="14"/>
    </location>
    <ligand>
        <name>CTP</name>
        <dbReference type="ChEBI" id="CHEBI:37563"/>
        <note>allosteric inhibitor</note>
    </ligand>
</feature>
<feature type="binding site" evidence="1">
    <location>
        <position position="14"/>
    </location>
    <ligand>
        <name>UTP</name>
        <dbReference type="ChEBI" id="CHEBI:46398"/>
    </ligand>
</feature>
<feature type="binding site" evidence="1">
    <location>
        <begin position="15"/>
        <end position="20"/>
    </location>
    <ligand>
        <name>ATP</name>
        <dbReference type="ChEBI" id="CHEBI:30616"/>
    </ligand>
</feature>
<feature type="binding site" evidence="1">
    <location>
        <position position="72"/>
    </location>
    <ligand>
        <name>ATP</name>
        <dbReference type="ChEBI" id="CHEBI:30616"/>
    </ligand>
</feature>
<feature type="binding site" evidence="1">
    <location>
        <position position="72"/>
    </location>
    <ligand>
        <name>Mg(2+)</name>
        <dbReference type="ChEBI" id="CHEBI:18420"/>
    </ligand>
</feature>
<feature type="binding site" evidence="1">
    <location>
        <position position="140"/>
    </location>
    <ligand>
        <name>Mg(2+)</name>
        <dbReference type="ChEBI" id="CHEBI:18420"/>
    </ligand>
</feature>
<feature type="binding site" evidence="1">
    <location>
        <begin position="147"/>
        <end position="149"/>
    </location>
    <ligand>
        <name>CTP</name>
        <dbReference type="ChEBI" id="CHEBI:37563"/>
        <note>allosteric inhibitor</note>
    </ligand>
</feature>
<feature type="binding site" evidence="1">
    <location>
        <begin position="187"/>
        <end position="192"/>
    </location>
    <ligand>
        <name>CTP</name>
        <dbReference type="ChEBI" id="CHEBI:37563"/>
        <note>allosteric inhibitor</note>
    </ligand>
</feature>
<feature type="binding site" evidence="1">
    <location>
        <begin position="187"/>
        <end position="192"/>
    </location>
    <ligand>
        <name>UTP</name>
        <dbReference type="ChEBI" id="CHEBI:46398"/>
    </ligand>
</feature>
<feature type="binding site" evidence="1">
    <location>
        <position position="223"/>
    </location>
    <ligand>
        <name>CTP</name>
        <dbReference type="ChEBI" id="CHEBI:37563"/>
        <note>allosteric inhibitor</note>
    </ligand>
</feature>
<feature type="binding site" evidence="1">
    <location>
        <position position="223"/>
    </location>
    <ligand>
        <name>UTP</name>
        <dbReference type="ChEBI" id="CHEBI:46398"/>
    </ligand>
</feature>
<feature type="binding site" evidence="1">
    <location>
        <position position="352"/>
    </location>
    <ligand>
        <name>L-glutamine</name>
        <dbReference type="ChEBI" id="CHEBI:58359"/>
    </ligand>
</feature>
<feature type="binding site" evidence="1">
    <location>
        <begin position="380"/>
        <end position="383"/>
    </location>
    <ligand>
        <name>L-glutamine</name>
        <dbReference type="ChEBI" id="CHEBI:58359"/>
    </ligand>
</feature>
<feature type="binding site" evidence="1">
    <location>
        <position position="403"/>
    </location>
    <ligand>
        <name>L-glutamine</name>
        <dbReference type="ChEBI" id="CHEBI:58359"/>
    </ligand>
</feature>
<feature type="binding site" evidence="1">
    <location>
        <position position="470"/>
    </location>
    <ligand>
        <name>L-glutamine</name>
        <dbReference type="ChEBI" id="CHEBI:58359"/>
    </ligand>
</feature>
<protein>
    <recommendedName>
        <fullName evidence="1">CTP synthase</fullName>
        <ecNumber evidence="1">6.3.4.2</ecNumber>
    </recommendedName>
    <alternativeName>
        <fullName evidence="1">Cytidine 5'-triphosphate synthase</fullName>
    </alternativeName>
    <alternativeName>
        <fullName evidence="1">Cytidine triphosphate synthetase</fullName>
        <shortName evidence="1">CTP synthetase</shortName>
        <shortName evidence="1">CTPS</shortName>
    </alternativeName>
    <alternativeName>
        <fullName evidence="1">UTP--ammonia ligase</fullName>
    </alternativeName>
</protein>
<gene>
    <name evidence="1" type="primary">pyrG</name>
    <name type="ordered locus">WIGBR3540</name>
</gene>
<name>PYRG_WIGBR</name>
<organism>
    <name type="scientific">Wigglesworthia glossinidia brevipalpis</name>
    <dbReference type="NCBI Taxonomy" id="36870"/>
    <lineage>
        <taxon>Bacteria</taxon>
        <taxon>Pseudomonadati</taxon>
        <taxon>Pseudomonadota</taxon>
        <taxon>Gammaproteobacteria</taxon>
        <taxon>Enterobacterales</taxon>
        <taxon>Erwiniaceae</taxon>
        <taxon>Wigglesworthia</taxon>
    </lineage>
</organism>
<evidence type="ECO:0000255" key="1">
    <source>
        <dbReference type="HAMAP-Rule" id="MF_01227"/>
    </source>
</evidence>
<evidence type="ECO:0000305" key="2"/>
<dbReference type="EC" id="6.3.4.2" evidence="1"/>
<dbReference type="EMBL" id="BA000021">
    <property type="protein sequence ID" value="BAC24500.1"/>
    <property type="status" value="ALT_INIT"/>
    <property type="molecule type" value="Genomic_DNA"/>
</dbReference>
<dbReference type="SMR" id="Q8D2K0"/>
<dbReference type="STRING" id="36870.gene:10368854"/>
<dbReference type="MEROPS" id="C26.964"/>
<dbReference type="KEGG" id="wbr:pyrG"/>
<dbReference type="eggNOG" id="COG0504">
    <property type="taxonomic scope" value="Bacteria"/>
</dbReference>
<dbReference type="HOGENOM" id="CLU_011675_5_0_6"/>
<dbReference type="OrthoDB" id="9801107at2"/>
<dbReference type="UniPathway" id="UPA00159">
    <property type="reaction ID" value="UER00277"/>
</dbReference>
<dbReference type="Proteomes" id="UP000000562">
    <property type="component" value="Chromosome"/>
</dbReference>
<dbReference type="GO" id="GO:0005829">
    <property type="term" value="C:cytosol"/>
    <property type="evidence" value="ECO:0007669"/>
    <property type="project" value="TreeGrafter"/>
</dbReference>
<dbReference type="GO" id="GO:0005524">
    <property type="term" value="F:ATP binding"/>
    <property type="evidence" value="ECO:0007669"/>
    <property type="project" value="UniProtKB-KW"/>
</dbReference>
<dbReference type="GO" id="GO:0003883">
    <property type="term" value="F:CTP synthase activity"/>
    <property type="evidence" value="ECO:0007669"/>
    <property type="project" value="UniProtKB-UniRule"/>
</dbReference>
<dbReference type="GO" id="GO:0004359">
    <property type="term" value="F:glutaminase activity"/>
    <property type="evidence" value="ECO:0007669"/>
    <property type="project" value="RHEA"/>
</dbReference>
<dbReference type="GO" id="GO:0042802">
    <property type="term" value="F:identical protein binding"/>
    <property type="evidence" value="ECO:0007669"/>
    <property type="project" value="TreeGrafter"/>
</dbReference>
<dbReference type="GO" id="GO:0046872">
    <property type="term" value="F:metal ion binding"/>
    <property type="evidence" value="ECO:0007669"/>
    <property type="project" value="UniProtKB-KW"/>
</dbReference>
<dbReference type="GO" id="GO:0044210">
    <property type="term" value="P:'de novo' CTP biosynthetic process"/>
    <property type="evidence" value="ECO:0007669"/>
    <property type="project" value="UniProtKB-UniRule"/>
</dbReference>
<dbReference type="GO" id="GO:0019856">
    <property type="term" value="P:pyrimidine nucleobase biosynthetic process"/>
    <property type="evidence" value="ECO:0007669"/>
    <property type="project" value="TreeGrafter"/>
</dbReference>
<dbReference type="CDD" id="cd03113">
    <property type="entry name" value="CTPS_N"/>
    <property type="match status" value="1"/>
</dbReference>
<dbReference type="CDD" id="cd01746">
    <property type="entry name" value="GATase1_CTP_Synthase"/>
    <property type="match status" value="1"/>
</dbReference>
<dbReference type="FunFam" id="3.40.50.300:FF:000009">
    <property type="entry name" value="CTP synthase"/>
    <property type="match status" value="1"/>
</dbReference>
<dbReference type="FunFam" id="3.40.50.880:FF:000002">
    <property type="entry name" value="CTP synthase"/>
    <property type="match status" value="1"/>
</dbReference>
<dbReference type="Gene3D" id="3.40.50.880">
    <property type="match status" value="1"/>
</dbReference>
<dbReference type="Gene3D" id="3.40.50.300">
    <property type="entry name" value="P-loop containing nucleotide triphosphate hydrolases"/>
    <property type="match status" value="1"/>
</dbReference>
<dbReference type="HAMAP" id="MF_01227">
    <property type="entry name" value="PyrG"/>
    <property type="match status" value="1"/>
</dbReference>
<dbReference type="InterPro" id="IPR029062">
    <property type="entry name" value="Class_I_gatase-like"/>
</dbReference>
<dbReference type="InterPro" id="IPR004468">
    <property type="entry name" value="CTP_synthase"/>
</dbReference>
<dbReference type="InterPro" id="IPR017456">
    <property type="entry name" value="CTP_synthase_N"/>
</dbReference>
<dbReference type="InterPro" id="IPR017926">
    <property type="entry name" value="GATASE"/>
</dbReference>
<dbReference type="InterPro" id="IPR033828">
    <property type="entry name" value="GATase1_CTP_Synthase"/>
</dbReference>
<dbReference type="InterPro" id="IPR027417">
    <property type="entry name" value="P-loop_NTPase"/>
</dbReference>
<dbReference type="NCBIfam" id="NF003792">
    <property type="entry name" value="PRK05380.1"/>
    <property type="match status" value="1"/>
</dbReference>
<dbReference type="NCBIfam" id="TIGR00337">
    <property type="entry name" value="PyrG"/>
    <property type="match status" value="1"/>
</dbReference>
<dbReference type="PANTHER" id="PTHR11550">
    <property type="entry name" value="CTP SYNTHASE"/>
    <property type="match status" value="1"/>
</dbReference>
<dbReference type="PANTHER" id="PTHR11550:SF0">
    <property type="entry name" value="CTP SYNTHASE-RELATED"/>
    <property type="match status" value="1"/>
</dbReference>
<dbReference type="Pfam" id="PF06418">
    <property type="entry name" value="CTP_synth_N"/>
    <property type="match status" value="1"/>
</dbReference>
<dbReference type="Pfam" id="PF00117">
    <property type="entry name" value="GATase"/>
    <property type="match status" value="1"/>
</dbReference>
<dbReference type="SUPFAM" id="SSF52317">
    <property type="entry name" value="Class I glutamine amidotransferase-like"/>
    <property type="match status" value="1"/>
</dbReference>
<dbReference type="SUPFAM" id="SSF52540">
    <property type="entry name" value="P-loop containing nucleoside triphosphate hydrolases"/>
    <property type="match status" value="1"/>
</dbReference>
<dbReference type="PROSITE" id="PS51273">
    <property type="entry name" value="GATASE_TYPE_1"/>
    <property type="match status" value="1"/>
</dbReference>
<comment type="function">
    <text evidence="1">Catalyzes the ATP-dependent amination of UTP to CTP with either L-glutamine or ammonia as the source of nitrogen. Regulates intracellular CTP levels through interactions with the four ribonucleotide triphosphates.</text>
</comment>
<comment type="catalytic activity">
    <reaction evidence="1">
        <text>UTP + L-glutamine + ATP + H2O = CTP + L-glutamate + ADP + phosphate + 2 H(+)</text>
        <dbReference type="Rhea" id="RHEA:26426"/>
        <dbReference type="ChEBI" id="CHEBI:15377"/>
        <dbReference type="ChEBI" id="CHEBI:15378"/>
        <dbReference type="ChEBI" id="CHEBI:29985"/>
        <dbReference type="ChEBI" id="CHEBI:30616"/>
        <dbReference type="ChEBI" id="CHEBI:37563"/>
        <dbReference type="ChEBI" id="CHEBI:43474"/>
        <dbReference type="ChEBI" id="CHEBI:46398"/>
        <dbReference type="ChEBI" id="CHEBI:58359"/>
        <dbReference type="ChEBI" id="CHEBI:456216"/>
        <dbReference type="EC" id="6.3.4.2"/>
    </reaction>
</comment>
<comment type="catalytic activity">
    <reaction evidence="1">
        <text>L-glutamine + H2O = L-glutamate + NH4(+)</text>
        <dbReference type="Rhea" id="RHEA:15889"/>
        <dbReference type="ChEBI" id="CHEBI:15377"/>
        <dbReference type="ChEBI" id="CHEBI:28938"/>
        <dbReference type="ChEBI" id="CHEBI:29985"/>
        <dbReference type="ChEBI" id="CHEBI:58359"/>
    </reaction>
</comment>
<comment type="catalytic activity">
    <reaction evidence="1">
        <text>UTP + NH4(+) + ATP = CTP + ADP + phosphate + 2 H(+)</text>
        <dbReference type="Rhea" id="RHEA:16597"/>
        <dbReference type="ChEBI" id="CHEBI:15378"/>
        <dbReference type="ChEBI" id="CHEBI:28938"/>
        <dbReference type="ChEBI" id="CHEBI:30616"/>
        <dbReference type="ChEBI" id="CHEBI:37563"/>
        <dbReference type="ChEBI" id="CHEBI:43474"/>
        <dbReference type="ChEBI" id="CHEBI:46398"/>
        <dbReference type="ChEBI" id="CHEBI:456216"/>
    </reaction>
</comment>
<comment type="activity regulation">
    <text evidence="1">Allosterically activated by GTP, when glutamine is the substrate; GTP has no effect on the reaction when ammonia is the substrate. The allosteric effector GTP functions by stabilizing the protein conformation that binds the tetrahedral intermediate(s) formed during glutamine hydrolysis. Inhibited by the product CTP, via allosteric rather than competitive inhibition.</text>
</comment>
<comment type="pathway">
    <text evidence="1">Pyrimidine metabolism; CTP biosynthesis via de novo pathway; CTP from UDP: step 2/2.</text>
</comment>
<comment type="subunit">
    <text evidence="1">Homotetramer.</text>
</comment>
<comment type="miscellaneous">
    <text evidence="1">CTPSs have evolved a hybrid strategy for distinguishing between UTP and CTP. The overlapping regions of the product feedback inhibitory and substrate sites recognize a common feature in both compounds, the triphosphate moiety. To differentiate isosteric substrate and product pyrimidine rings, an additional pocket far from the expected kinase/ligase catalytic site, specifically recognizes the cytosine and ribose portions of the product inhibitor.</text>
</comment>
<comment type="similarity">
    <text evidence="1">Belongs to the CTP synthase family.</text>
</comment>
<comment type="sequence caution" evidence="2">
    <conflict type="erroneous initiation">
        <sequence resource="EMBL-CDS" id="BAC24500"/>
    </conflict>
</comment>
<keyword id="KW-0067">ATP-binding</keyword>
<keyword id="KW-0315">Glutamine amidotransferase</keyword>
<keyword id="KW-0436">Ligase</keyword>
<keyword id="KW-0460">Magnesium</keyword>
<keyword id="KW-0479">Metal-binding</keyword>
<keyword id="KW-0547">Nucleotide-binding</keyword>
<keyword id="KW-0665">Pyrimidine biosynthesis</keyword>
<keyword id="KW-1185">Reference proteome</keyword>
<reference key="1">
    <citation type="journal article" date="2002" name="Nat. Genet.">
        <title>Genome sequence of the endocellular obligate symbiont of tsetse flies, Wigglesworthia glossinidia.</title>
        <authorList>
            <person name="Akman L."/>
            <person name="Yamashita A."/>
            <person name="Watanabe H."/>
            <person name="Oshima K."/>
            <person name="Shiba T."/>
            <person name="Hattori M."/>
            <person name="Aksoy S."/>
        </authorList>
    </citation>
    <scope>NUCLEOTIDE SEQUENCE [LARGE SCALE GENOMIC DNA]</scope>
</reference>
<sequence>MAKYYIFITGGVVSSLGKGITAASLGSVLESRNLKVTLMKLDPYINVNPGTISPIQHGEVFVTEDGAETDLDLGHYERFIKTKMSKKNSFTSGKIYSEVLKNERKGFYLGSTIQVIPHITNEIKKCIINAGKGFDILLVEIGGTVGDIESLPFLESIRQMSIEIGKNKILYIHLTLVPYLKISKEVKTKPTQHSVKELLSIGIQPDILICRSEKNVSKYEKSKIALFCNVPKQAVFSLKNTNSIYKIPILIKKQGLDSYVCDRFCIKRPEADLSKWKEVIYKQKNPLGNVNIGIIGKYTELPDSYRSLISALEHAGLKNRLMINIQLINSKKIESLGISCLKNLHAILIPGGFGYRGVEGKIIAAKYSREKKIPYFGICLGMQVALIEFARNVTGLSEANSTEFINNCKHPVIAKISEWNKSINYLNKSNISSNNYSTMRLGNQKCHLTKGSLAFKIYNNSIILERHRHRYEVNNIFIEKIKFSGLSVSGWAYYDNHKLVEIIEYSNHPWFVGSQFHPEFNSTPRNSHPLFISFVKAAFDFKNKNI</sequence>
<accession>Q8D2K0</accession>